<dbReference type="EMBL" id="AM777385">
    <property type="protein sequence ID" value="CAO85989.1"/>
    <property type="molecule type" value="Genomic_DNA"/>
</dbReference>
<dbReference type="RefSeq" id="YP_001531296.1">
    <property type="nucleotide sequence ID" value="NC_009950.1"/>
</dbReference>
<dbReference type="SMR" id="A8Y9A0"/>
<dbReference type="GeneID" id="5696630"/>
<dbReference type="KEGG" id="lper:5696630"/>
<dbReference type="GO" id="GO:0009535">
    <property type="term" value="C:chloroplast thylakoid membrane"/>
    <property type="evidence" value="ECO:0007669"/>
    <property type="project" value="UniProtKB-SubCell"/>
</dbReference>
<dbReference type="GO" id="GO:0009539">
    <property type="term" value="C:photosystem II reaction center"/>
    <property type="evidence" value="ECO:0007669"/>
    <property type="project" value="InterPro"/>
</dbReference>
<dbReference type="GO" id="GO:0015979">
    <property type="term" value="P:photosynthesis"/>
    <property type="evidence" value="ECO:0007669"/>
    <property type="project" value="UniProtKB-UniRule"/>
</dbReference>
<dbReference type="Gene3D" id="6.10.250.2070">
    <property type="match status" value="1"/>
</dbReference>
<dbReference type="HAMAP" id="MF_01305">
    <property type="entry name" value="PSII_PsbJ"/>
    <property type="match status" value="1"/>
</dbReference>
<dbReference type="InterPro" id="IPR002682">
    <property type="entry name" value="PSII_PsbJ"/>
</dbReference>
<dbReference type="InterPro" id="IPR037267">
    <property type="entry name" value="PSII_PsbJ_sf"/>
</dbReference>
<dbReference type="NCBIfam" id="NF002722">
    <property type="entry name" value="PRK02565.1"/>
    <property type="match status" value="1"/>
</dbReference>
<dbReference type="PANTHER" id="PTHR34812">
    <property type="entry name" value="PHOTOSYSTEM II REACTION CENTER PROTEIN J"/>
    <property type="match status" value="1"/>
</dbReference>
<dbReference type="PANTHER" id="PTHR34812:SF3">
    <property type="entry name" value="PHOTOSYSTEM II REACTION CENTER PROTEIN J"/>
    <property type="match status" value="1"/>
</dbReference>
<dbReference type="Pfam" id="PF01788">
    <property type="entry name" value="PsbJ"/>
    <property type="match status" value="1"/>
</dbReference>
<dbReference type="SUPFAM" id="SSF161021">
    <property type="entry name" value="Photosystem II reaction center protein J, PsbJ"/>
    <property type="match status" value="1"/>
</dbReference>
<comment type="function">
    <text evidence="1">One of the components of the core complex of photosystem II (PSII). PSII is a light-driven water:plastoquinone oxidoreductase that uses light energy to abstract electrons from H(2)O, generating O(2) and a proton gradient subsequently used for ATP formation. It consists of a core antenna complex that captures photons, and an electron transfer chain that converts photonic excitation into a charge separation.</text>
</comment>
<comment type="subunit">
    <text evidence="1">PSII is composed of 1 copy each of membrane proteins PsbA, PsbB, PsbC, PsbD, PsbE, PsbF, PsbH, PsbI, PsbJ, PsbK, PsbL, PsbM, PsbT, PsbX, PsbY, PsbZ, Psb30/Ycf12, at least 3 peripheral proteins of the oxygen-evolving complex and a large number of cofactors. It forms dimeric complexes.</text>
</comment>
<comment type="subcellular location">
    <subcellularLocation>
        <location evidence="1">Plastid</location>
        <location evidence="1">Chloroplast thylakoid membrane</location>
        <topology evidence="1">Single-pass membrane protein</topology>
    </subcellularLocation>
</comment>
<comment type="similarity">
    <text evidence="1">Belongs to the PsbJ family.</text>
</comment>
<proteinExistence type="inferred from homology"/>
<organism>
    <name type="scientific">Lolium perenne</name>
    <name type="common">Perennial ryegrass</name>
    <dbReference type="NCBI Taxonomy" id="4522"/>
    <lineage>
        <taxon>Eukaryota</taxon>
        <taxon>Viridiplantae</taxon>
        <taxon>Streptophyta</taxon>
        <taxon>Embryophyta</taxon>
        <taxon>Tracheophyta</taxon>
        <taxon>Spermatophyta</taxon>
        <taxon>Magnoliopsida</taxon>
        <taxon>Liliopsida</taxon>
        <taxon>Poales</taxon>
        <taxon>Poaceae</taxon>
        <taxon>BOP clade</taxon>
        <taxon>Pooideae</taxon>
        <taxon>Poodae</taxon>
        <taxon>Poeae</taxon>
        <taxon>Poeae Chloroplast Group 2 (Poeae type)</taxon>
        <taxon>Loliodinae</taxon>
        <taxon>Loliinae</taxon>
        <taxon>Lolium</taxon>
    </lineage>
</organism>
<feature type="chain" id="PRO_0000322063" description="Photosystem II reaction center protein J">
    <location>
        <begin position="1"/>
        <end position="40"/>
    </location>
</feature>
<feature type="transmembrane region" description="Helical" evidence="1">
    <location>
        <begin position="8"/>
        <end position="28"/>
    </location>
</feature>
<geneLocation type="chloroplast"/>
<evidence type="ECO:0000255" key="1">
    <source>
        <dbReference type="HAMAP-Rule" id="MF_01305"/>
    </source>
</evidence>
<accession>A8Y9A0</accession>
<name>PSBJ_LOLPR</name>
<sequence length="40" mass="4117">MADTTGRIPLWLIGTVTGIPVIGLVGVFFYGSYSGLGSSL</sequence>
<protein>
    <recommendedName>
        <fullName evidence="1">Photosystem II reaction center protein J</fullName>
        <shortName evidence="1">PSII-J</shortName>
    </recommendedName>
</protein>
<gene>
    <name evidence="1" type="primary">psbJ</name>
    <name type="ordered locus">LopeCp053</name>
</gene>
<keyword id="KW-0150">Chloroplast</keyword>
<keyword id="KW-0472">Membrane</keyword>
<keyword id="KW-0602">Photosynthesis</keyword>
<keyword id="KW-0604">Photosystem II</keyword>
<keyword id="KW-0934">Plastid</keyword>
<keyword id="KW-0674">Reaction center</keyword>
<keyword id="KW-0793">Thylakoid</keyword>
<keyword id="KW-0812">Transmembrane</keyword>
<keyword id="KW-1133">Transmembrane helix</keyword>
<reference key="1">
    <citation type="journal article" date="2008" name="PLoS ONE">
        <title>An optimized chloroplast DNA extraction protocol for grasses (Poaceae) proves suitable for whole plastid genome sequencing and SNP detection.</title>
        <authorList>
            <person name="Diekmann K."/>
            <person name="Hodkinson T.R."/>
            <person name="Fricke E."/>
            <person name="Barth S."/>
        </authorList>
    </citation>
    <scope>NUCLEOTIDE SEQUENCE [LARGE SCALE GENOMIC DNA]</scope>
    <source>
        <strain>cv. Cashel</strain>
    </source>
</reference>